<evidence type="ECO:0000255" key="1">
    <source>
        <dbReference type="HAMAP-Rule" id="MF_00518"/>
    </source>
</evidence>
<comment type="function">
    <text evidence="1">An aminoacyl-tRNA editing enzyme that deacylates mischarged D-aminoacyl-tRNAs. Also deacylates mischarged glycyl-tRNA(Ala), protecting cells against glycine mischarging by AlaRS. Acts via tRNA-based rather than protein-based catalysis; rejects L-amino acids rather than detecting D-amino acids in the active site. By recycling D-aminoacyl-tRNA to D-amino acids and free tRNA molecules, this enzyme counteracts the toxicity associated with the formation of D-aminoacyl-tRNA entities in vivo and helps enforce protein L-homochirality.</text>
</comment>
<comment type="catalytic activity">
    <reaction evidence="1">
        <text>glycyl-tRNA(Ala) + H2O = tRNA(Ala) + glycine + H(+)</text>
        <dbReference type="Rhea" id="RHEA:53744"/>
        <dbReference type="Rhea" id="RHEA-COMP:9657"/>
        <dbReference type="Rhea" id="RHEA-COMP:13640"/>
        <dbReference type="ChEBI" id="CHEBI:15377"/>
        <dbReference type="ChEBI" id="CHEBI:15378"/>
        <dbReference type="ChEBI" id="CHEBI:57305"/>
        <dbReference type="ChEBI" id="CHEBI:78442"/>
        <dbReference type="ChEBI" id="CHEBI:78522"/>
        <dbReference type="EC" id="3.1.1.96"/>
    </reaction>
</comment>
<comment type="catalytic activity">
    <reaction evidence="1">
        <text>a D-aminoacyl-tRNA + H2O = a tRNA + a D-alpha-amino acid + H(+)</text>
        <dbReference type="Rhea" id="RHEA:13953"/>
        <dbReference type="Rhea" id="RHEA-COMP:10123"/>
        <dbReference type="Rhea" id="RHEA-COMP:10124"/>
        <dbReference type="ChEBI" id="CHEBI:15377"/>
        <dbReference type="ChEBI" id="CHEBI:15378"/>
        <dbReference type="ChEBI" id="CHEBI:59871"/>
        <dbReference type="ChEBI" id="CHEBI:78442"/>
        <dbReference type="ChEBI" id="CHEBI:79333"/>
        <dbReference type="EC" id="3.1.1.96"/>
    </reaction>
</comment>
<comment type="subunit">
    <text evidence="1">Homodimer.</text>
</comment>
<comment type="subcellular location">
    <subcellularLocation>
        <location evidence="1">Cytoplasm</location>
    </subcellularLocation>
</comment>
<comment type="domain">
    <text evidence="1">A Gly-cisPro motif from one monomer fits into the active site of the other monomer to allow specific chiral rejection of L-amino acids.</text>
</comment>
<comment type="similarity">
    <text evidence="1">Belongs to the DTD family.</text>
</comment>
<protein>
    <recommendedName>
        <fullName evidence="1">D-aminoacyl-tRNA deacylase</fullName>
        <shortName evidence="1">DTD</shortName>
        <ecNumber evidence="1">3.1.1.96</ecNumber>
    </recommendedName>
    <alternativeName>
        <fullName evidence="1">Gly-tRNA(Ala) deacylase</fullName>
    </alternativeName>
</protein>
<keyword id="KW-0963">Cytoplasm</keyword>
<keyword id="KW-0378">Hydrolase</keyword>
<keyword id="KW-1185">Reference proteome</keyword>
<keyword id="KW-0694">RNA-binding</keyword>
<keyword id="KW-0820">tRNA-binding</keyword>
<reference key="1">
    <citation type="submission" date="2003-03" db="EMBL/GenBank/DDBJ databases">
        <title>The complete genome sequence of Neisseria gonorrhoeae.</title>
        <authorList>
            <person name="Lewis L.A."/>
            <person name="Gillaspy A.F."/>
            <person name="McLaughlin R.E."/>
            <person name="Gipson M."/>
            <person name="Ducey T.F."/>
            <person name="Ownbey T."/>
            <person name="Hartman K."/>
            <person name="Nydick C."/>
            <person name="Carson M.B."/>
            <person name="Vaughn J."/>
            <person name="Thomson C."/>
            <person name="Song L."/>
            <person name="Lin S."/>
            <person name="Yuan X."/>
            <person name="Najar F."/>
            <person name="Zhan M."/>
            <person name="Ren Q."/>
            <person name="Zhu H."/>
            <person name="Qi S."/>
            <person name="Kenton S.M."/>
            <person name="Lai H."/>
            <person name="White J.D."/>
            <person name="Clifton S."/>
            <person name="Roe B.A."/>
            <person name="Dyer D.W."/>
        </authorList>
    </citation>
    <scope>NUCLEOTIDE SEQUENCE [LARGE SCALE GENOMIC DNA]</scope>
    <source>
        <strain>ATCC 700825 / FA 1090</strain>
    </source>
</reference>
<accession>Q5F6A6</accession>
<name>DTD_NEIG1</name>
<feature type="chain" id="PRO_0000164563" description="D-aminoacyl-tRNA deacylase">
    <location>
        <begin position="1"/>
        <end position="163"/>
    </location>
</feature>
<feature type="short sequence motif" description="Gly-cisPro motif, important for rejection of L-amino acids" evidence="1">
    <location>
        <begin position="141"/>
        <end position="142"/>
    </location>
</feature>
<sequence length="163" mass="17667">MRAVIQKTVGAKVDVVSEAGTETCGKIDGGFVVLLGVTHSDTEKDARYIADKIAHLRVFEDEAGKLNLSLKDVGGAVLLVSQFTLYADAASGRRPSFSQAAPAEQAQRLYLRTAELLRGHGIHVETGRFRTHMQVSLCNDGPVTILLDSFMTRISPKMKVVPD</sequence>
<proteinExistence type="inferred from homology"/>
<organism>
    <name type="scientific">Neisseria gonorrhoeae (strain ATCC 700825 / FA 1090)</name>
    <dbReference type="NCBI Taxonomy" id="242231"/>
    <lineage>
        <taxon>Bacteria</taxon>
        <taxon>Pseudomonadati</taxon>
        <taxon>Pseudomonadota</taxon>
        <taxon>Betaproteobacteria</taxon>
        <taxon>Neisseriales</taxon>
        <taxon>Neisseriaceae</taxon>
        <taxon>Neisseria</taxon>
    </lineage>
</organism>
<dbReference type="EC" id="3.1.1.96" evidence="1"/>
<dbReference type="EMBL" id="AE004969">
    <property type="protein sequence ID" value="AAW90281.1"/>
    <property type="molecule type" value="Genomic_DNA"/>
</dbReference>
<dbReference type="RefSeq" id="WP_003689787.1">
    <property type="nucleotide sequence ID" value="NC_002946.2"/>
</dbReference>
<dbReference type="RefSeq" id="YP_208693.1">
    <property type="nucleotide sequence ID" value="NC_002946.2"/>
</dbReference>
<dbReference type="SMR" id="Q5F6A6"/>
<dbReference type="STRING" id="242231.NGO_1654"/>
<dbReference type="GeneID" id="66753934"/>
<dbReference type="KEGG" id="ngo:NGO_1654"/>
<dbReference type="PATRIC" id="fig|242231.10.peg.1972"/>
<dbReference type="HOGENOM" id="CLU_076901_1_0_4"/>
<dbReference type="Proteomes" id="UP000000535">
    <property type="component" value="Chromosome"/>
</dbReference>
<dbReference type="GO" id="GO:0005737">
    <property type="term" value="C:cytoplasm"/>
    <property type="evidence" value="ECO:0007669"/>
    <property type="project" value="UniProtKB-SubCell"/>
</dbReference>
<dbReference type="GO" id="GO:0051500">
    <property type="term" value="F:D-tyrosyl-tRNA(Tyr) deacylase activity"/>
    <property type="evidence" value="ECO:0007669"/>
    <property type="project" value="TreeGrafter"/>
</dbReference>
<dbReference type="GO" id="GO:0106026">
    <property type="term" value="F:Gly-tRNA(Ala) deacylase activity"/>
    <property type="evidence" value="ECO:0007669"/>
    <property type="project" value="UniProtKB-UniRule"/>
</dbReference>
<dbReference type="GO" id="GO:0043908">
    <property type="term" value="F:Ser(Gly)-tRNA(Ala) hydrolase activity"/>
    <property type="evidence" value="ECO:0007669"/>
    <property type="project" value="UniProtKB-UniRule"/>
</dbReference>
<dbReference type="GO" id="GO:0000049">
    <property type="term" value="F:tRNA binding"/>
    <property type="evidence" value="ECO:0007669"/>
    <property type="project" value="UniProtKB-UniRule"/>
</dbReference>
<dbReference type="GO" id="GO:0019478">
    <property type="term" value="P:D-amino acid catabolic process"/>
    <property type="evidence" value="ECO:0007669"/>
    <property type="project" value="UniProtKB-UniRule"/>
</dbReference>
<dbReference type="CDD" id="cd00563">
    <property type="entry name" value="Dtyr_deacylase"/>
    <property type="match status" value="1"/>
</dbReference>
<dbReference type="FunFam" id="3.50.80.10:FF:000002">
    <property type="entry name" value="D-aminoacyl-tRNA deacylase"/>
    <property type="match status" value="1"/>
</dbReference>
<dbReference type="Gene3D" id="3.50.80.10">
    <property type="entry name" value="D-tyrosyl-tRNA(Tyr) deacylase"/>
    <property type="match status" value="1"/>
</dbReference>
<dbReference type="HAMAP" id="MF_00518">
    <property type="entry name" value="Deacylase_Dtd"/>
    <property type="match status" value="1"/>
</dbReference>
<dbReference type="InterPro" id="IPR003732">
    <property type="entry name" value="Daa-tRNA_deacyls_DTD"/>
</dbReference>
<dbReference type="InterPro" id="IPR023509">
    <property type="entry name" value="DTD-like_sf"/>
</dbReference>
<dbReference type="NCBIfam" id="TIGR00256">
    <property type="entry name" value="D-aminoacyl-tRNA deacylase"/>
    <property type="match status" value="1"/>
</dbReference>
<dbReference type="PANTHER" id="PTHR10472:SF5">
    <property type="entry name" value="D-AMINOACYL-TRNA DEACYLASE 1"/>
    <property type="match status" value="1"/>
</dbReference>
<dbReference type="PANTHER" id="PTHR10472">
    <property type="entry name" value="D-TYROSYL-TRNA TYR DEACYLASE"/>
    <property type="match status" value="1"/>
</dbReference>
<dbReference type="Pfam" id="PF02580">
    <property type="entry name" value="Tyr_Deacylase"/>
    <property type="match status" value="1"/>
</dbReference>
<dbReference type="SUPFAM" id="SSF69500">
    <property type="entry name" value="DTD-like"/>
    <property type="match status" value="1"/>
</dbReference>
<gene>
    <name evidence="1" type="primary">dtd</name>
    <name type="ordered locus">NGO_1654</name>
</gene>